<feature type="chain" id="PRO_0000228971" description="Protein arginine N-methyltransferase 2">
    <location>
        <begin position="1"/>
        <end position="413"/>
    </location>
</feature>
<feature type="domain" description="RMT2" evidence="2">
    <location>
        <begin position="192"/>
        <end position="413"/>
    </location>
</feature>
<feature type="region of interest" description="Disordered" evidence="3">
    <location>
        <begin position="65"/>
        <end position="85"/>
    </location>
</feature>
<feature type="region of interest" description="Disordered" evidence="3">
    <location>
        <begin position="148"/>
        <end position="178"/>
    </location>
</feature>
<feature type="compositionally biased region" description="Acidic residues" evidence="3">
    <location>
        <begin position="148"/>
        <end position="173"/>
    </location>
</feature>
<feature type="binding site" evidence="2">
    <location>
        <position position="201"/>
    </location>
    <ligand>
        <name>S-adenosyl-L-methionine</name>
        <dbReference type="ChEBI" id="CHEBI:59789"/>
    </ligand>
</feature>
<feature type="binding site" evidence="2">
    <location>
        <position position="230"/>
    </location>
    <ligand>
        <name>S-adenosyl-L-methionine</name>
        <dbReference type="ChEBI" id="CHEBI:59789"/>
    </ligand>
</feature>
<feature type="binding site" evidence="2">
    <location>
        <begin position="250"/>
        <end position="255"/>
    </location>
    <ligand>
        <name>S-adenosyl-L-methionine</name>
        <dbReference type="ChEBI" id="CHEBI:59789"/>
    </ligand>
</feature>
<feature type="binding site" evidence="2">
    <location>
        <begin position="271"/>
        <end position="273"/>
    </location>
    <ligand>
        <name>S-adenosyl-L-methionine</name>
        <dbReference type="ChEBI" id="CHEBI:59789"/>
    </ligand>
</feature>
<feature type="binding site" evidence="2">
    <location>
        <begin position="298"/>
        <end position="299"/>
    </location>
    <ligand>
        <name>S-adenosyl-L-methionine</name>
        <dbReference type="ChEBI" id="CHEBI:59789"/>
    </ligand>
</feature>
<feature type="binding site" evidence="2">
    <location>
        <position position="318"/>
    </location>
    <ligand>
        <name>S-adenosyl-L-methionine</name>
        <dbReference type="ChEBI" id="CHEBI:59789"/>
    </ligand>
</feature>
<gene>
    <name evidence="1" type="primary">rmt2</name>
    <name type="ORF">AO090011000791</name>
</gene>
<name>RMT2_ASPOR</name>
<comment type="function">
    <text evidence="1">S-adenosyl-L-methionine-dependent protein-arginine N-methyltransferase that methylates the delta-nitrogen atom of arginine residues to form N5-methylarginine (type IV) in target proteins. Monomethylates ribosomal protein L12.</text>
</comment>
<comment type="subunit">
    <text evidence="1">Monomer.</text>
</comment>
<comment type="subcellular location">
    <subcellularLocation>
        <location evidence="1">Cytoplasm</location>
    </subcellularLocation>
    <subcellularLocation>
        <location evidence="1">Nucleus</location>
    </subcellularLocation>
</comment>
<comment type="similarity">
    <text evidence="2">Belongs to the class I-like SAM-binding methyltransferase superfamily. RMT2 methyltransferase family.</text>
</comment>
<accession>Q2TZM9</accession>
<sequence length="413" mass="46476">MTDPTTEIDVDLDVQEILLAASQHDIPKLRQLIRSNQTIANPVNVKDPETGYAPLHAAIAACEPDDEEPNGVQTNGEQGDEQKSVEEKGSATVRFLLQEGAIWNDLDNNNETPGCVARRLGLTELYEQLVDAGVRAELLLNRLDGYEELEDDDEEEEEGQEEQTGTEEVEVEGESAPQLVEATTTTETAMETGPDVTNSRYLDSNLTFQNDRLLDQDQNGVMMAWETDIMAKSAKKLLPTSGLRVLNVGHGMGIVDGFIQEQSPAEHHIIEAHPEVVAEMKRKGWGEKPGVTIHEGRWQDILPDLVGQGVMFDAIYYDTFAESYGDFREFFSEQVIGLLEQEGKWSFFNGMGADRQISYDVYQKVAEMDLMDAGFDVEWEEIALPKLDNEWDGVRRAYWQIESYRLPLCKYMD</sequence>
<evidence type="ECO:0000250" key="1">
    <source>
        <dbReference type="UniProtKB" id="Q03305"/>
    </source>
</evidence>
<evidence type="ECO:0000255" key="2">
    <source>
        <dbReference type="PROSITE-ProRule" id="PRU00892"/>
    </source>
</evidence>
<evidence type="ECO:0000256" key="3">
    <source>
        <dbReference type="SAM" id="MobiDB-lite"/>
    </source>
</evidence>
<proteinExistence type="inferred from homology"/>
<organism>
    <name type="scientific">Aspergillus oryzae (strain ATCC 42149 / RIB 40)</name>
    <name type="common">Yellow koji mold</name>
    <dbReference type="NCBI Taxonomy" id="510516"/>
    <lineage>
        <taxon>Eukaryota</taxon>
        <taxon>Fungi</taxon>
        <taxon>Dikarya</taxon>
        <taxon>Ascomycota</taxon>
        <taxon>Pezizomycotina</taxon>
        <taxon>Eurotiomycetes</taxon>
        <taxon>Eurotiomycetidae</taxon>
        <taxon>Eurotiales</taxon>
        <taxon>Aspergillaceae</taxon>
        <taxon>Aspergillus</taxon>
        <taxon>Aspergillus subgen. Circumdati</taxon>
    </lineage>
</organism>
<keyword id="KW-0963">Cytoplasm</keyword>
<keyword id="KW-0489">Methyltransferase</keyword>
<keyword id="KW-0539">Nucleus</keyword>
<keyword id="KW-1185">Reference proteome</keyword>
<keyword id="KW-0949">S-adenosyl-L-methionine</keyword>
<keyword id="KW-0808">Transferase</keyword>
<reference key="1">
    <citation type="journal article" date="2005" name="Nature">
        <title>Genome sequencing and analysis of Aspergillus oryzae.</title>
        <authorList>
            <person name="Machida M."/>
            <person name="Asai K."/>
            <person name="Sano M."/>
            <person name="Tanaka T."/>
            <person name="Kumagai T."/>
            <person name="Terai G."/>
            <person name="Kusumoto K."/>
            <person name="Arima T."/>
            <person name="Akita O."/>
            <person name="Kashiwagi Y."/>
            <person name="Abe K."/>
            <person name="Gomi K."/>
            <person name="Horiuchi H."/>
            <person name="Kitamoto K."/>
            <person name="Kobayashi T."/>
            <person name="Takeuchi M."/>
            <person name="Denning D.W."/>
            <person name="Galagan J.E."/>
            <person name="Nierman W.C."/>
            <person name="Yu J."/>
            <person name="Archer D.B."/>
            <person name="Bennett J.W."/>
            <person name="Bhatnagar D."/>
            <person name="Cleveland T.E."/>
            <person name="Fedorova N.D."/>
            <person name="Gotoh O."/>
            <person name="Horikawa H."/>
            <person name="Hosoyama A."/>
            <person name="Ichinomiya M."/>
            <person name="Igarashi R."/>
            <person name="Iwashita K."/>
            <person name="Juvvadi P.R."/>
            <person name="Kato M."/>
            <person name="Kato Y."/>
            <person name="Kin T."/>
            <person name="Kokubun A."/>
            <person name="Maeda H."/>
            <person name="Maeyama N."/>
            <person name="Maruyama J."/>
            <person name="Nagasaki H."/>
            <person name="Nakajima T."/>
            <person name="Oda K."/>
            <person name="Okada K."/>
            <person name="Paulsen I."/>
            <person name="Sakamoto K."/>
            <person name="Sawano T."/>
            <person name="Takahashi M."/>
            <person name="Takase K."/>
            <person name="Terabayashi Y."/>
            <person name="Wortman J.R."/>
            <person name="Yamada O."/>
            <person name="Yamagata Y."/>
            <person name="Anazawa H."/>
            <person name="Hata Y."/>
            <person name="Koide Y."/>
            <person name="Komori T."/>
            <person name="Koyama Y."/>
            <person name="Minetoki T."/>
            <person name="Suharnan S."/>
            <person name="Tanaka A."/>
            <person name="Isono K."/>
            <person name="Kuhara S."/>
            <person name="Ogasawara N."/>
            <person name="Kikuchi H."/>
        </authorList>
    </citation>
    <scope>NUCLEOTIDE SEQUENCE [LARGE SCALE GENOMIC DNA]</scope>
    <source>
        <strain>ATCC 42149 / RIB 40</strain>
    </source>
</reference>
<protein>
    <recommendedName>
        <fullName evidence="1">Protein arginine N-methyltransferase 2</fullName>
        <ecNumber evidence="1">2.1.1.-</ecNumber>
    </recommendedName>
    <alternativeName>
        <fullName evidence="1">Protein-arginine N5-methyltransferase</fullName>
    </alternativeName>
    <alternativeName>
        <fullName evidence="1">Type IV protein arginine N-methyltransferase</fullName>
        <shortName evidence="1">Type IV PRMT</shortName>
    </alternativeName>
</protein>
<dbReference type="EC" id="2.1.1.-" evidence="1"/>
<dbReference type="EMBL" id="BA000055">
    <property type="protein sequence ID" value="BAE65236.1"/>
    <property type="molecule type" value="Genomic_DNA"/>
</dbReference>
<dbReference type="RefSeq" id="XP_001826369.1">
    <property type="nucleotide sequence ID" value="XM_001826317.2"/>
</dbReference>
<dbReference type="SMR" id="Q2TZM9"/>
<dbReference type="STRING" id="510516.Q2TZM9"/>
<dbReference type="EnsemblFungi" id="BAE65236">
    <property type="protein sequence ID" value="BAE65236"/>
    <property type="gene ID" value="AO090011000791"/>
</dbReference>
<dbReference type="GeneID" id="5998472"/>
<dbReference type="KEGG" id="aor:AO090011000791"/>
<dbReference type="VEuPathDB" id="FungiDB:AO090011000791"/>
<dbReference type="HOGENOM" id="CLU_033831_0_0_1"/>
<dbReference type="OMA" id="YWVVDNY"/>
<dbReference type="OrthoDB" id="95070at5052"/>
<dbReference type="Proteomes" id="UP000006564">
    <property type="component" value="Chromosome 7"/>
</dbReference>
<dbReference type="GO" id="GO:0005737">
    <property type="term" value="C:cytoplasm"/>
    <property type="evidence" value="ECO:0007669"/>
    <property type="project" value="UniProtKB-SubCell"/>
</dbReference>
<dbReference type="GO" id="GO:0005634">
    <property type="term" value="C:nucleus"/>
    <property type="evidence" value="ECO:0007669"/>
    <property type="project" value="UniProtKB-SubCell"/>
</dbReference>
<dbReference type="GO" id="GO:0019702">
    <property type="term" value="F:protein arginine N5-methyltransferase activity"/>
    <property type="evidence" value="ECO:0007669"/>
    <property type="project" value="EnsemblFungi"/>
</dbReference>
<dbReference type="GO" id="GO:0032259">
    <property type="term" value="P:methylation"/>
    <property type="evidence" value="ECO:0007669"/>
    <property type="project" value="UniProtKB-KW"/>
</dbReference>
<dbReference type="CDD" id="cd02440">
    <property type="entry name" value="AdoMet_MTases"/>
    <property type="match status" value="1"/>
</dbReference>
<dbReference type="FunFam" id="1.25.40.20:FF:000394">
    <property type="entry name" value="Arginine N-methyltransferase 2"/>
    <property type="match status" value="1"/>
</dbReference>
<dbReference type="FunFam" id="3.40.50.150:FF:000135">
    <property type="entry name" value="Arginine N-methyltransferase 2"/>
    <property type="match status" value="1"/>
</dbReference>
<dbReference type="Gene3D" id="1.25.40.20">
    <property type="entry name" value="Ankyrin repeat-containing domain"/>
    <property type="match status" value="1"/>
</dbReference>
<dbReference type="Gene3D" id="3.40.50.150">
    <property type="entry name" value="Vaccinia Virus protein VP39"/>
    <property type="match status" value="1"/>
</dbReference>
<dbReference type="InterPro" id="IPR036770">
    <property type="entry name" value="Ankyrin_rpt-contain_sf"/>
</dbReference>
<dbReference type="InterPro" id="IPR017408">
    <property type="entry name" value="Arginine_N-MeTrfase_2"/>
</dbReference>
<dbReference type="InterPro" id="IPR051038">
    <property type="entry name" value="RMT2/GAMT_Mtase"/>
</dbReference>
<dbReference type="InterPro" id="IPR026480">
    <property type="entry name" value="RMT2_dom"/>
</dbReference>
<dbReference type="InterPro" id="IPR029063">
    <property type="entry name" value="SAM-dependent_MTases_sf"/>
</dbReference>
<dbReference type="PANTHER" id="PTHR32379">
    <property type="entry name" value="GUANIDINOACETATE N-METHYLTRANSFERASE"/>
    <property type="match status" value="1"/>
</dbReference>
<dbReference type="PANTHER" id="PTHR32379:SF1">
    <property type="entry name" value="GUANIDINOACETATE N-METHYLTRANSFERASE"/>
    <property type="match status" value="1"/>
</dbReference>
<dbReference type="PIRSF" id="PIRSF038148">
    <property type="entry name" value="Arginine_N-mtfrase-2"/>
    <property type="match status" value="1"/>
</dbReference>
<dbReference type="SUPFAM" id="SSF48403">
    <property type="entry name" value="Ankyrin repeat"/>
    <property type="match status" value="1"/>
</dbReference>
<dbReference type="SUPFAM" id="SSF53335">
    <property type="entry name" value="S-adenosyl-L-methionine-dependent methyltransferases"/>
    <property type="match status" value="1"/>
</dbReference>
<dbReference type="PROSITE" id="PS51559">
    <property type="entry name" value="SAM_RMT2"/>
    <property type="match status" value="1"/>
</dbReference>